<organism>
    <name type="scientific">Staphylococcus epidermidis (strain ATCC 12228 / FDA PCI 1200)</name>
    <dbReference type="NCBI Taxonomy" id="176280"/>
    <lineage>
        <taxon>Bacteria</taxon>
        <taxon>Bacillati</taxon>
        <taxon>Bacillota</taxon>
        <taxon>Bacilli</taxon>
        <taxon>Bacillales</taxon>
        <taxon>Staphylococcaceae</taxon>
        <taxon>Staphylococcus</taxon>
    </lineage>
</organism>
<sequence>MVQEYDVVVIGAGHAGIEAGLASARRGAKTLMLTINLDNIAFMPCNPSVGGPAKGIVVREIDALGGQMAKTIDKTHIQMRMLNTGKGPAVRALRAQADKVLYQQEMKRVLENEDNLDIMQGMVDELIIEDNEVKGVRTNIGTEYRSKAVIITTGTFLRGEIILGNLKYSSGPNHQLPSVTLADNLRKLGFDIVRFKTGTPPRVNARTIDYSKTEIQPGDDIGRAFSFETTEFILDQLPCWLTYTNGDTHQVIDDNLHLSAMYSGMIKGTGPRYCPSIEDKFVRFNDKPRHQLFLEPEGRNTNEVYVQGLSTSLPEHVQRQMLETIPGLEKADMMRAGYAIEYDAIVPTQLWPTLETKAIKNLYTAGQINGTSGYEEAAGQGIMAGINAAGNVLGTGEKILSRSDAYIGVLIDDLVTKGTNEPYRLLTSRAEYRLLLRHDNADLRLTDMGYELGLISEERYARFNEKRQQIKDEIQRLTDVRIKPNEHTQAIIEAKGGSRLKDGILAIDLLRRPEMNYETILEILEESHQLPEAVEEQVEIQTKYEGYINKSLQQVEKVKRMEAKKIPEDLDYSKVDSLASEAREKLAEVKPLNIAQASRISGVNPADISILLVYLEQGKLQRVKQ</sequence>
<feature type="chain" id="PRO_0000117181" description="tRNA uridine 5-carboxymethylaminomethyl modification enzyme MnmG">
    <location>
        <begin position="1"/>
        <end position="625"/>
    </location>
</feature>
<feature type="binding site" evidence="1">
    <location>
        <begin position="11"/>
        <end position="16"/>
    </location>
    <ligand>
        <name>FAD</name>
        <dbReference type="ChEBI" id="CHEBI:57692"/>
    </ligand>
</feature>
<feature type="binding site" evidence="1">
    <location>
        <position position="123"/>
    </location>
    <ligand>
        <name>FAD</name>
        <dbReference type="ChEBI" id="CHEBI:57692"/>
    </ligand>
</feature>
<feature type="binding site" evidence="1">
    <location>
        <position position="178"/>
    </location>
    <ligand>
        <name>FAD</name>
        <dbReference type="ChEBI" id="CHEBI:57692"/>
    </ligand>
</feature>
<feature type="binding site" evidence="1">
    <location>
        <begin position="270"/>
        <end position="284"/>
    </location>
    <ligand>
        <name>NAD(+)</name>
        <dbReference type="ChEBI" id="CHEBI:57540"/>
    </ligand>
</feature>
<feature type="binding site" evidence="1">
    <location>
        <position position="367"/>
    </location>
    <ligand>
        <name>FAD</name>
        <dbReference type="ChEBI" id="CHEBI:57692"/>
    </ligand>
</feature>
<evidence type="ECO:0000255" key="1">
    <source>
        <dbReference type="HAMAP-Rule" id="MF_00129"/>
    </source>
</evidence>
<comment type="function">
    <text evidence="1">NAD-binding protein involved in the addition of a carboxymethylaminomethyl (cmnm) group at the wobble position (U34) of certain tRNAs, forming tRNA-cmnm(5)s(2)U34.</text>
</comment>
<comment type="cofactor">
    <cofactor evidence="1">
        <name>FAD</name>
        <dbReference type="ChEBI" id="CHEBI:57692"/>
    </cofactor>
</comment>
<comment type="subunit">
    <text evidence="1">Homodimer. Heterotetramer of two MnmE and two MnmG subunits.</text>
</comment>
<comment type="subcellular location">
    <subcellularLocation>
        <location evidence="1">Cytoplasm</location>
    </subcellularLocation>
</comment>
<comment type="similarity">
    <text evidence="1">Belongs to the MnmG family.</text>
</comment>
<accession>Q8CMN6</accession>
<name>MNMG_STAES</name>
<protein>
    <recommendedName>
        <fullName evidence="1">tRNA uridine 5-carboxymethylaminomethyl modification enzyme MnmG</fullName>
    </recommendedName>
    <alternativeName>
        <fullName evidence="1">Glucose-inhibited division protein A</fullName>
    </alternativeName>
</protein>
<keyword id="KW-0963">Cytoplasm</keyword>
<keyword id="KW-0274">FAD</keyword>
<keyword id="KW-0285">Flavoprotein</keyword>
<keyword id="KW-0520">NAD</keyword>
<keyword id="KW-0819">tRNA processing</keyword>
<reference key="1">
    <citation type="journal article" date="2003" name="Mol. Microbiol.">
        <title>Genome-based analysis of virulence genes in a non-biofilm-forming Staphylococcus epidermidis strain (ATCC 12228).</title>
        <authorList>
            <person name="Zhang Y.-Q."/>
            <person name="Ren S.-X."/>
            <person name="Li H.-L."/>
            <person name="Wang Y.-X."/>
            <person name="Fu G."/>
            <person name="Yang J."/>
            <person name="Qin Z.-Q."/>
            <person name="Miao Y.-G."/>
            <person name="Wang W.-Y."/>
            <person name="Chen R.-S."/>
            <person name="Shen Y."/>
            <person name="Chen Z."/>
            <person name="Yuan Z.-H."/>
            <person name="Zhao G.-P."/>
            <person name="Qu D."/>
            <person name="Danchin A."/>
            <person name="Wen Y.-M."/>
        </authorList>
    </citation>
    <scope>NUCLEOTIDE SEQUENCE [LARGE SCALE GENOMIC DNA]</scope>
    <source>
        <strain>ATCC 12228 / FDA PCI 1200</strain>
    </source>
</reference>
<dbReference type="EMBL" id="AE015929">
    <property type="protein sequence ID" value="AAO06059.1"/>
    <property type="molecule type" value="Genomic_DNA"/>
</dbReference>
<dbReference type="RefSeq" id="NP_765971.1">
    <property type="nucleotide sequence ID" value="NC_004461.1"/>
</dbReference>
<dbReference type="RefSeq" id="WP_001831818.1">
    <property type="nucleotide sequence ID" value="NZ_WBME01000012.1"/>
</dbReference>
<dbReference type="SMR" id="Q8CMN6"/>
<dbReference type="GeneID" id="50019721"/>
<dbReference type="KEGG" id="sep:SE_2416"/>
<dbReference type="PATRIC" id="fig|176280.10.peg.2355"/>
<dbReference type="eggNOG" id="COG0445">
    <property type="taxonomic scope" value="Bacteria"/>
</dbReference>
<dbReference type="HOGENOM" id="CLU_007831_2_2_9"/>
<dbReference type="OrthoDB" id="9815560at2"/>
<dbReference type="Proteomes" id="UP000001411">
    <property type="component" value="Chromosome"/>
</dbReference>
<dbReference type="GO" id="GO:0005829">
    <property type="term" value="C:cytosol"/>
    <property type="evidence" value="ECO:0007669"/>
    <property type="project" value="TreeGrafter"/>
</dbReference>
<dbReference type="GO" id="GO:0050660">
    <property type="term" value="F:flavin adenine dinucleotide binding"/>
    <property type="evidence" value="ECO:0007669"/>
    <property type="project" value="UniProtKB-UniRule"/>
</dbReference>
<dbReference type="GO" id="GO:0030488">
    <property type="term" value="P:tRNA methylation"/>
    <property type="evidence" value="ECO:0007669"/>
    <property type="project" value="TreeGrafter"/>
</dbReference>
<dbReference type="GO" id="GO:0002098">
    <property type="term" value="P:tRNA wobble uridine modification"/>
    <property type="evidence" value="ECO:0007669"/>
    <property type="project" value="InterPro"/>
</dbReference>
<dbReference type="FunFam" id="1.10.10.1800:FF:000001">
    <property type="entry name" value="tRNA uridine 5-carboxymethylaminomethyl modification enzyme MnmG"/>
    <property type="match status" value="1"/>
</dbReference>
<dbReference type="FunFam" id="1.10.150.570:FF:000001">
    <property type="entry name" value="tRNA uridine 5-carboxymethylaminomethyl modification enzyme MnmG"/>
    <property type="match status" value="1"/>
</dbReference>
<dbReference type="FunFam" id="3.50.50.60:FF:000002">
    <property type="entry name" value="tRNA uridine 5-carboxymethylaminomethyl modification enzyme MnmG"/>
    <property type="match status" value="1"/>
</dbReference>
<dbReference type="FunFam" id="3.50.50.60:FF:000063">
    <property type="entry name" value="tRNA uridine 5-carboxymethylaminomethyl modification enzyme MnmG"/>
    <property type="match status" value="1"/>
</dbReference>
<dbReference type="Gene3D" id="3.50.50.60">
    <property type="entry name" value="FAD/NAD(P)-binding domain"/>
    <property type="match status" value="2"/>
</dbReference>
<dbReference type="Gene3D" id="1.10.150.570">
    <property type="entry name" value="GidA associated domain, C-terminal subdomain"/>
    <property type="match status" value="1"/>
</dbReference>
<dbReference type="Gene3D" id="1.10.10.1800">
    <property type="entry name" value="tRNA uridine 5-carboxymethylaminomethyl modification enzyme MnmG/GidA"/>
    <property type="match status" value="1"/>
</dbReference>
<dbReference type="HAMAP" id="MF_00129">
    <property type="entry name" value="MnmG_GidA"/>
    <property type="match status" value="1"/>
</dbReference>
<dbReference type="InterPro" id="IPR036188">
    <property type="entry name" value="FAD/NAD-bd_sf"/>
</dbReference>
<dbReference type="InterPro" id="IPR049312">
    <property type="entry name" value="GIDA_C_N"/>
</dbReference>
<dbReference type="InterPro" id="IPR004416">
    <property type="entry name" value="MnmG"/>
</dbReference>
<dbReference type="InterPro" id="IPR002218">
    <property type="entry name" value="MnmG-rel"/>
</dbReference>
<dbReference type="InterPro" id="IPR020595">
    <property type="entry name" value="MnmG-rel_CS"/>
</dbReference>
<dbReference type="InterPro" id="IPR026904">
    <property type="entry name" value="MnmG_C"/>
</dbReference>
<dbReference type="InterPro" id="IPR047001">
    <property type="entry name" value="MnmG_C_subdom"/>
</dbReference>
<dbReference type="InterPro" id="IPR044920">
    <property type="entry name" value="MnmG_C_subdom_sf"/>
</dbReference>
<dbReference type="InterPro" id="IPR040131">
    <property type="entry name" value="MnmG_N"/>
</dbReference>
<dbReference type="NCBIfam" id="TIGR00136">
    <property type="entry name" value="mnmG_gidA"/>
    <property type="match status" value="1"/>
</dbReference>
<dbReference type="PANTHER" id="PTHR11806">
    <property type="entry name" value="GLUCOSE INHIBITED DIVISION PROTEIN A"/>
    <property type="match status" value="1"/>
</dbReference>
<dbReference type="PANTHER" id="PTHR11806:SF0">
    <property type="entry name" value="PROTEIN MTO1 HOMOLOG, MITOCHONDRIAL"/>
    <property type="match status" value="1"/>
</dbReference>
<dbReference type="Pfam" id="PF01134">
    <property type="entry name" value="GIDA"/>
    <property type="match status" value="1"/>
</dbReference>
<dbReference type="Pfam" id="PF21680">
    <property type="entry name" value="GIDA_C_1st"/>
    <property type="match status" value="1"/>
</dbReference>
<dbReference type="Pfam" id="PF13932">
    <property type="entry name" value="SAM_GIDA_C"/>
    <property type="match status" value="1"/>
</dbReference>
<dbReference type="PRINTS" id="PR00411">
    <property type="entry name" value="PNDRDTASEI"/>
</dbReference>
<dbReference type="SMART" id="SM01228">
    <property type="entry name" value="GIDA_assoc_3"/>
    <property type="match status" value="1"/>
</dbReference>
<dbReference type="SUPFAM" id="SSF51905">
    <property type="entry name" value="FAD/NAD(P)-binding domain"/>
    <property type="match status" value="1"/>
</dbReference>
<dbReference type="PROSITE" id="PS01280">
    <property type="entry name" value="GIDA_1"/>
    <property type="match status" value="1"/>
</dbReference>
<dbReference type="PROSITE" id="PS01281">
    <property type="entry name" value="GIDA_2"/>
    <property type="match status" value="1"/>
</dbReference>
<proteinExistence type="inferred from homology"/>
<gene>
    <name evidence="1" type="primary">mnmG</name>
    <name evidence="1" type="synonym">gidA</name>
    <name type="ordered locus">SE_2416</name>
</gene>